<dbReference type="EC" id="2.2.1.6"/>
<dbReference type="EMBL" id="X02541">
    <property type="protein sequence ID" value="CAA26387.1"/>
    <property type="molecule type" value="Genomic_DNA"/>
</dbReference>
<dbReference type="EMBL" id="L10328">
    <property type="protein sequence ID" value="AAA62023.1"/>
    <property type="molecule type" value="Genomic_DNA"/>
</dbReference>
<dbReference type="EMBL" id="U00096">
    <property type="protein sequence ID" value="AAC76694.1"/>
    <property type="molecule type" value="Genomic_DNA"/>
</dbReference>
<dbReference type="EMBL" id="AP009048">
    <property type="protein sequence ID" value="BAE77622.1"/>
    <property type="molecule type" value="Genomic_DNA"/>
</dbReference>
<dbReference type="PIR" id="A93569">
    <property type="entry name" value="YCEC1L"/>
</dbReference>
<dbReference type="RefSeq" id="NP_418127.1">
    <property type="nucleotide sequence ID" value="NC_000913.3"/>
</dbReference>
<dbReference type="RefSeq" id="WP_000168475.1">
    <property type="nucleotide sequence ID" value="NZ_SSZK01000043.1"/>
</dbReference>
<dbReference type="PDB" id="6LPI">
    <property type="method" value="X-ray"/>
    <property type="resolution" value="2.85 A"/>
    <property type="chains" value="A/B/C/D=1-562"/>
</dbReference>
<dbReference type="PDBsum" id="6LPI"/>
<dbReference type="SMR" id="P08142"/>
<dbReference type="BioGRID" id="4262586">
    <property type="interactions" value="12"/>
</dbReference>
<dbReference type="BioGRID" id="852488">
    <property type="interactions" value="3"/>
</dbReference>
<dbReference type="ComplexPortal" id="CPX-3573">
    <property type="entry name" value="Acetolactate synthase I complex"/>
</dbReference>
<dbReference type="DIP" id="DIP-10019N"/>
<dbReference type="FunCoup" id="P08142">
    <property type="interactions" value="370"/>
</dbReference>
<dbReference type="IntAct" id="P08142">
    <property type="interactions" value="9"/>
</dbReference>
<dbReference type="STRING" id="511145.b3671"/>
<dbReference type="jPOST" id="P08142"/>
<dbReference type="PaxDb" id="511145-b3671"/>
<dbReference type="EnsemblBacteria" id="AAC76694">
    <property type="protein sequence ID" value="AAC76694"/>
    <property type="gene ID" value="b3671"/>
</dbReference>
<dbReference type="GeneID" id="948182"/>
<dbReference type="KEGG" id="ecj:JW3646"/>
<dbReference type="KEGG" id="eco:b3671"/>
<dbReference type="KEGG" id="ecoc:C3026_19895"/>
<dbReference type="PATRIC" id="fig|511145.12.peg.3793"/>
<dbReference type="EchoBASE" id="EB0489"/>
<dbReference type="eggNOG" id="COG0028">
    <property type="taxonomic scope" value="Bacteria"/>
</dbReference>
<dbReference type="HOGENOM" id="CLU_013748_1_2_6"/>
<dbReference type="InParanoid" id="P08142"/>
<dbReference type="OMA" id="WREPRSF"/>
<dbReference type="OrthoDB" id="9785953at2"/>
<dbReference type="PhylomeDB" id="P08142"/>
<dbReference type="BioCyc" id="EcoCyc:LARGEILVB-MONOMER"/>
<dbReference type="BioCyc" id="MetaCyc:LARGEILVB-MONOMER"/>
<dbReference type="BRENDA" id="2.2.1.6">
    <property type="organism ID" value="2026"/>
</dbReference>
<dbReference type="UniPathway" id="UPA00047">
    <property type="reaction ID" value="UER00055"/>
</dbReference>
<dbReference type="UniPathway" id="UPA00049">
    <property type="reaction ID" value="UER00059"/>
</dbReference>
<dbReference type="PRO" id="PR:P08142"/>
<dbReference type="Proteomes" id="UP000000625">
    <property type="component" value="Chromosome"/>
</dbReference>
<dbReference type="GO" id="GO:0005948">
    <property type="term" value="C:acetolactate synthase complex"/>
    <property type="evidence" value="ECO:0000314"/>
    <property type="project" value="EcoCyc"/>
</dbReference>
<dbReference type="GO" id="GO:0003984">
    <property type="term" value="F:acetolactate synthase activity"/>
    <property type="evidence" value="ECO:0000314"/>
    <property type="project" value="EcoCyc"/>
</dbReference>
<dbReference type="GO" id="GO:0050660">
    <property type="term" value="F:flavin adenine dinucleotide binding"/>
    <property type="evidence" value="ECO:0000318"/>
    <property type="project" value="GO_Central"/>
</dbReference>
<dbReference type="GO" id="GO:0000287">
    <property type="term" value="F:magnesium ion binding"/>
    <property type="evidence" value="ECO:0007669"/>
    <property type="project" value="InterPro"/>
</dbReference>
<dbReference type="GO" id="GO:0030976">
    <property type="term" value="F:thiamine pyrophosphate binding"/>
    <property type="evidence" value="ECO:0007669"/>
    <property type="project" value="InterPro"/>
</dbReference>
<dbReference type="GO" id="GO:0009082">
    <property type="term" value="P:branched-chain amino acid biosynthetic process"/>
    <property type="evidence" value="ECO:0000314"/>
    <property type="project" value="ComplexPortal"/>
</dbReference>
<dbReference type="GO" id="GO:0009097">
    <property type="term" value="P:isoleucine biosynthetic process"/>
    <property type="evidence" value="ECO:0000314"/>
    <property type="project" value="EcoCyc"/>
</dbReference>
<dbReference type="GO" id="GO:0009099">
    <property type="term" value="P:L-valine biosynthetic process"/>
    <property type="evidence" value="ECO:0000314"/>
    <property type="project" value="EcoCyc"/>
</dbReference>
<dbReference type="CDD" id="cd02015">
    <property type="entry name" value="TPP_AHAS"/>
    <property type="match status" value="1"/>
</dbReference>
<dbReference type="CDD" id="cd07035">
    <property type="entry name" value="TPP_PYR_POX_like"/>
    <property type="match status" value="1"/>
</dbReference>
<dbReference type="FunFam" id="3.40.50.1220:FF:000014">
    <property type="entry name" value="Acetolactate synthase"/>
    <property type="match status" value="1"/>
</dbReference>
<dbReference type="FunFam" id="3.40.50.970:FF:000007">
    <property type="entry name" value="Acetolactate synthase"/>
    <property type="match status" value="1"/>
</dbReference>
<dbReference type="FunFam" id="3.40.50.970:FF:000016">
    <property type="entry name" value="Acetolactate synthase"/>
    <property type="match status" value="1"/>
</dbReference>
<dbReference type="Gene3D" id="3.40.50.970">
    <property type="match status" value="2"/>
</dbReference>
<dbReference type="Gene3D" id="3.40.50.1220">
    <property type="entry name" value="TPP-binding domain"/>
    <property type="match status" value="1"/>
</dbReference>
<dbReference type="InterPro" id="IPR012846">
    <property type="entry name" value="Acetolactate_synth_lsu"/>
</dbReference>
<dbReference type="InterPro" id="IPR039368">
    <property type="entry name" value="AHAS_TPP"/>
</dbReference>
<dbReference type="InterPro" id="IPR029035">
    <property type="entry name" value="DHS-like_NAD/FAD-binding_dom"/>
</dbReference>
<dbReference type="InterPro" id="IPR029061">
    <property type="entry name" value="THDP-binding"/>
</dbReference>
<dbReference type="InterPro" id="IPR012000">
    <property type="entry name" value="Thiamin_PyroP_enz_cen_dom"/>
</dbReference>
<dbReference type="InterPro" id="IPR012001">
    <property type="entry name" value="Thiamin_PyroP_enz_TPP-bd_dom"/>
</dbReference>
<dbReference type="InterPro" id="IPR000399">
    <property type="entry name" value="TPP-bd_CS"/>
</dbReference>
<dbReference type="InterPro" id="IPR045229">
    <property type="entry name" value="TPP_enz"/>
</dbReference>
<dbReference type="InterPro" id="IPR011766">
    <property type="entry name" value="TPP_enzyme_TPP-bd"/>
</dbReference>
<dbReference type="NCBIfam" id="TIGR00118">
    <property type="entry name" value="acolac_lg"/>
    <property type="match status" value="1"/>
</dbReference>
<dbReference type="NCBIfam" id="NF006016">
    <property type="entry name" value="PRK08155.1"/>
    <property type="match status" value="1"/>
</dbReference>
<dbReference type="PANTHER" id="PTHR18968:SF170">
    <property type="entry name" value="ACETOLACTATE SYNTHASE ISOZYME 1 LARGE SUBUNIT"/>
    <property type="match status" value="1"/>
</dbReference>
<dbReference type="PANTHER" id="PTHR18968">
    <property type="entry name" value="THIAMINE PYROPHOSPHATE ENZYMES"/>
    <property type="match status" value="1"/>
</dbReference>
<dbReference type="Pfam" id="PF02775">
    <property type="entry name" value="TPP_enzyme_C"/>
    <property type="match status" value="1"/>
</dbReference>
<dbReference type="Pfam" id="PF00205">
    <property type="entry name" value="TPP_enzyme_M"/>
    <property type="match status" value="1"/>
</dbReference>
<dbReference type="Pfam" id="PF02776">
    <property type="entry name" value="TPP_enzyme_N"/>
    <property type="match status" value="1"/>
</dbReference>
<dbReference type="SUPFAM" id="SSF52467">
    <property type="entry name" value="DHS-like NAD/FAD-binding domain"/>
    <property type="match status" value="1"/>
</dbReference>
<dbReference type="SUPFAM" id="SSF52518">
    <property type="entry name" value="Thiamin diphosphate-binding fold (THDP-binding)"/>
    <property type="match status" value="2"/>
</dbReference>
<dbReference type="PROSITE" id="PS00187">
    <property type="entry name" value="TPP_ENZYMES"/>
    <property type="match status" value="1"/>
</dbReference>
<name>ILVB_ECOLI</name>
<gene>
    <name type="primary">ilvB</name>
    <name type="ordered locus">b3671</name>
    <name type="ordered locus">JW3646</name>
</gene>
<evidence type="ECO:0000250" key="1"/>
<evidence type="ECO:0000305" key="2"/>
<evidence type="ECO:0007829" key="3">
    <source>
        <dbReference type="PDB" id="6LPI"/>
    </source>
</evidence>
<keyword id="KW-0002">3D-structure</keyword>
<keyword id="KW-0028">Amino-acid biosynthesis</keyword>
<keyword id="KW-0100">Branched-chain amino acid biosynthesis</keyword>
<keyword id="KW-0274">FAD</keyword>
<keyword id="KW-0285">Flavoprotein</keyword>
<keyword id="KW-0460">Magnesium</keyword>
<keyword id="KW-0479">Metal-binding</keyword>
<keyword id="KW-1185">Reference proteome</keyword>
<keyword id="KW-0786">Thiamine pyrophosphate</keyword>
<keyword id="KW-0808">Transferase</keyword>
<sequence length="562" mass="60441">MASSGTTSTRKRFTGAEFIVHFLEQQGIKIVTGIPGGSILPVYDALSQSTQIRHILARHEQGAGFIAQGMARTDGKPAVCMACSGPGATNLVTAIADARLDSIPLICITGQVPASMIGTDAFQEVDTYGISIPITKHNYLVRHIEELPQVMSDAFRIAQSGRPGPVWIDIPKDVQTAVFEIETQPAMAEKAAAPAFSEESIRDAAAMINAAKRPVLYLGGGVINAPARVRELAEKAQLPTTMTLMALGMLPKAHPLSLGMLGMHGVRSTNYILQEADLLIVLGARFDDRAIGKTEQFCPNAKIIHVDIDRAELGKIKQPHVAIQADVDDVLAQLIPLVEAQPRAEWHQLVADLQREFPCPIPKACDPLSHYGLINAVAACVDDNAIITTDVGQHQMWTAQAYPLNRPRQWLTSGGLGTMGFGLPAAIGAALANPDRKVLCFSGDGSLMMNIQEMATASENQLDVKIILMNNEALGLVHQQQSLFYEQGVFAATYPGKINFMQIAAGFGLETCDLNNEADPQASLQEIINRPGPALIHVRIDAEEKVYPMVPPGAANTEMVGE</sequence>
<feature type="chain" id="PRO_0000090784" description="Acetolactate synthase isozyme 1 large subunit">
    <location>
        <begin position="1"/>
        <end position="562"/>
    </location>
</feature>
<feature type="region of interest" description="Thiamine pyrophosphate binding">
    <location>
        <begin position="393"/>
        <end position="473"/>
    </location>
</feature>
<feature type="binding site" evidence="1">
    <location>
        <position position="60"/>
    </location>
    <ligand>
        <name>thiamine diphosphate</name>
        <dbReference type="ChEBI" id="CHEBI:58937"/>
    </ligand>
</feature>
<feature type="binding site" evidence="1">
    <location>
        <position position="162"/>
    </location>
    <ligand>
        <name>FAD</name>
        <dbReference type="ChEBI" id="CHEBI:57692"/>
    </ligand>
</feature>
<feature type="binding site" evidence="1">
    <location>
        <begin position="264"/>
        <end position="285"/>
    </location>
    <ligand>
        <name>FAD</name>
        <dbReference type="ChEBI" id="CHEBI:57692"/>
    </ligand>
</feature>
<feature type="binding site" evidence="1">
    <location>
        <begin position="307"/>
        <end position="326"/>
    </location>
    <ligand>
        <name>FAD</name>
        <dbReference type="ChEBI" id="CHEBI:57692"/>
    </ligand>
</feature>
<feature type="binding site" evidence="1">
    <location>
        <position position="444"/>
    </location>
    <ligand>
        <name>Mg(2+)</name>
        <dbReference type="ChEBI" id="CHEBI:18420"/>
    </ligand>
</feature>
<feature type="binding site" evidence="1">
    <location>
        <position position="471"/>
    </location>
    <ligand>
        <name>Mg(2+)</name>
        <dbReference type="ChEBI" id="CHEBI:18420"/>
    </ligand>
</feature>
<feature type="strand" evidence="3">
    <location>
        <begin position="12"/>
        <end position="14"/>
    </location>
</feature>
<feature type="helix" evidence="3">
    <location>
        <begin position="15"/>
        <end position="25"/>
    </location>
</feature>
<feature type="strand" evidence="3">
    <location>
        <begin position="30"/>
        <end position="33"/>
    </location>
</feature>
<feature type="helix" evidence="3">
    <location>
        <begin position="37"/>
        <end position="39"/>
    </location>
</feature>
<feature type="helix" evidence="3">
    <location>
        <begin position="40"/>
        <end position="47"/>
    </location>
</feature>
<feature type="strand" evidence="3">
    <location>
        <begin position="53"/>
        <end position="56"/>
    </location>
</feature>
<feature type="helix" evidence="3">
    <location>
        <begin position="60"/>
        <end position="74"/>
    </location>
</feature>
<feature type="strand" evidence="3">
    <location>
        <begin position="78"/>
        <end position="82"/>
    </location>
</feature>
<feature type="helix" evidence="3">
    <location>
        <begin position="86"/>
        <end position="101"/>
    </location>
</feature>
<feature type="strand" evidence="3">
    <location>
        <begin position="105"/>
        <end position="111"/>
    </location>
</feature>
<feature type="turn" evidence="3">
    <location>
        <begin position="117"/>
        <end position="120"/>
    </location>
</feature>
<feature type="helix" evidence="3">
    <location>
        <begin position="127"/>
        <end position="131"/>
    </location>
</feature>
<feature type="helix" evidence="3">
    <location>
        <begin position="132"/>
        <end position="134"/>
    </location>
</feature>
<feature type="strand" evidence="3">
    <location>
        <begin position="135"/>
        <end position="140"/>
    </location>
</feature>
<feature type="helix" evidence="3">
    <location>
        <begin position="144"/>
        <end position="146"/>
    </location>
</feature>
<feature type="helix" evidence="3">
    <location>
        <begin position="147"/>
        <end position="159"/>
    </location>
</feature>
<feature type="strand" evidence="3">
    <location>
        <begin position="160"/>
        <end position="162"/>
    </location>
</feature>
<feature type="strand" evidence="3">
    <location>
        <begin position="166"/>
        <end position="171"/>
    </location>
</feature>
<feature type="helix" evidence="3">
    <location>
        <begin position="172"/>
        <end position="175"/>
    </location>
</feature>
<feature type="strand" evidence="3">
    <location>
        <begin position="178"/>
        <end position="180"/>
    </location>
</feature>
<feature type="helix" evidence="3">
    <location>
        <begin position="198"/>
        <end position="210"/>
    </location>
</feature>
<feature type="strand" evidence="3">
    <location>
        <begin position="212"/>
        <end position="218"/>
    </location>
</feature>
<feature type="helix" evidence="3">
    <location>
        <begin position="220"/>
        <end position="222"/>
    </location>
</feature>
<feature type="helix" evidence="3">
    <location>
        <begin position="226"/>
        <end position="235"/>
    </location>
</feature>
<feature type="strand" evidence="3">
    <location>
        <begin position="240"/>
        <end position="242"/>
    </location>
</feature>
<feature type="helix" evidence="3">
    <location>
        <begin position="244"/>
        <end position="246"/>
    </location>
</feature>
<feature type="strand" evidence="3">
    <location>
        <begin position="257"/>
        <end position="260"/>
    </location>
</feature>
<feature type="helix" evidence="3">
    <location>
        <begin position="267"/>
        <end position="273"/>
    </location>
</feature>
<feature type="strand" evidence="3">
    <location>
        <begin position="277"/>
        <end position="283"/>
    </location>
</feature>
<feature type="helix" evidence="3">
    <location>
        <begin position="288"/>
        <end position="291"/>
    </location>
</feature>
<feature type="helix" evidence="3">
    <location>
        <begin position="294"/>
        <end position="296"/>
    </location>
</feature>
<feature type="strand" evidence="3">
    <location>
        <begin position="302"/>
        <end position="308"/>
    </location>
</feature>
<feature type="helix" evidence="3">
    <location>
        <begin position="310"/>
        <end position="312"/>
    </location>
</feature>
<feature type="strand" evidence="3">
    <location>
        <begin position="315"/>
        <end position="317"/>
    </location>
</feature>
<feature type="strand" evidence="3">
    <location>
        <begin position="320"/>
        <end position="325"/>
    </location>
</feature>
<feature type="helix" evidence="3">
    <location>
        <begin position="327"/>
        <end position="334"/>
    </location>
</feature>
<feature type="helix" evidence="3">
    <location>
        <begin position="335"/>
        <end position="337"/>
    </location>
</feature>
<feature type="helix" evidence="3">
    <location>
        <begin position="344"/>
        <end position="354"/>
    </location>
</feature>
<feature type="helix" evidence="3">
    <location>
        <begin position="370"/>
        <end position="378"/>
    </location>
</feature>
<feature type="strand" evidence="3">
    <location>
        <begin position="386"/>
        <end position="389"/>
    </location>
</feature>
<feature type="helix" evidence="3">
    <location>
        <begin position="393"/>
        <end position="401"/>
    </location>
</feature>
<feature type="helix" evidence="3">
    <location>
        <begin position="422"/>
        <end position="432"/>
    </location>
</feature>
<feature type="strand" evidence="3">
    <location>
        <begin position="434"/>
        <end position="436"/>
    </location>
</feature>
<feature type="strand" evidence="3">
    <location>
        <begin position="438"/>
        <end position="443"/>
    </location>
</feature>
<feature type="helix" evidence="3">
    <location>
        <begin position="444"/>
        <end position="447"/>
    </location>
</feature>
<feature type="turn" evidence="3">
    <location>
        <begin position="448"/>
        <end position="452"/>
    </location>
</feature>
<feature type="helix" evidence="3">
    <location>
        <begin position="453"/>
        <end position="459"/>
    </location>
</feature>
<feature type="strand" evidence="3">
    <location>
        <begin position="464"/>
        <end position="470"/>
    </location>
</feature>
<feature type="helix" evidence="3">
    <location>
        <begin position="476"/>
        <end position="484"/>
    </location>
</feature>
<feature type="helix" evidence="3">
    <location>
        <begin position="500"/>
        <end position="506"/>
    </location>
</feature>
<feature type="strand" evidence="3">
    <location>
        <begin position="510"/>
        <end position="513"/>
    </location>
</feature>
<feature type="helix" evidence="3">
    <location>
        <begin position="521"/>
        <end position="529"/>
    </location>
</feature>
<feature type="strand" evidence="3">
    <location>
        <begin position="530"/>
        <end position="532"/>
    </location>
</feature>
<feature type="strand" evidence="3">
    <location>
        <begin position="534"/>
        <end position="539"/>
    </location>
</feature>
<protein>
    <recommendedName>
        <fullName>Acetolactate synthase isozyme 1 large subunit</fullName>
        <shortName>AHAS-I</shortName>
        <ecNumber>2.2.1.6</ecNumber>
    </recommendedName>
    <alternativeName>
        <fullName>Acetohydroxy-acid synthase I large subunit</fullName>
        <shortName>ALS-I</shortName>
    </alternativeName>
</protein>
<comment type="catalytic activity">
    <reaction>
        <text>2 pyruvate + H(+) = (2S)-2-acetolactate + CO2</text>
        <dbReference type="Rhea" id="RHEA:25249"/>
        <dbReference type="ChEBI" id="CHEBI:15361"/>
        <dbReference type="ChEBI" id="CHEBI:15378"/>
        <dbReference type="ChEBI" id="CHEBI:16526"/>
        <dbReference type="ChEBI" id="CHEBI:58476"/>
        <dbReference type="EC" id="2.2.1.6"/>
    </reaction>
</comment>
<comment type="cofactor">
    <cofactor evidence="1">
        <name>Mg(2+)</name>
        <dbReference type="ChEBI" id="CHEBI:18420"/>
    </cofactor>
    <text evidence="1">Binds 1 Mg(2+) ion per subunit.</text>
</comment>
<comment type="cofactor">
    <cofactor evidence="1">
        <name>thiamine diphosphate</name>
        <dbReference type="ChEBI" id="CHEBI:58937"/>
    </cofactor>
    <text evidence="1">Binds 1 thiamine pyrophosphate per subunit.</text>
</comment>
<comment type="pathway">
    <text>Amino-acid biosynthesis; L-isoleucine biosynthesis; L-isoleucine from 2-oxobutanoate: step 1/4.</text>
</comment>
<comment type="pathway">
    <text>Amino-acid biosynthesis; L-valine biosynthesis; L-valine from pyruvate: step 1/4.</text>
</comment>
<comment type="subunit">
    <text>Dimer of large and small chains.</text>
</comment>
<comment type="interaction">
    <interactant intactId="EBI-552948">
        <id>P08142</id>
    </interactant>
    <interactant intactId="EBI-1133508">
        <id>P0ADF8</id>
        <label>ilvN</label>
    </interactant>
    <organismsDiffer>false</organismsDiffer>
    <experiments>4</experiments>
</comment>
<comment type="miscellaneous">
    <text>E.coli contains genes for 3 AHAS isozymes: ilvBN, ilvGM and ilvIH.</text>
</comment>
<comment type="miscellaneous">
    <text evidence="1">Contains 1 molecule of FAD per monomer. The role of this cofactor is not clear considering that the reaction does not involve redox chemistry (By similarity).</text>
</comment>
<comment type="similarity">
    <text evidence="2">Belongs to the TPP enzyme family.</text>
</comment>
<reference key="1">
    <citation type="journal article" date="1985" name="Nucleic Acids Res.">
        <title>The nucleotide sequence of the ilvBN operon of Escherichia coli: sequence homologies of the acetohydroxy acid synthase isozymes.</title>
        <authorList>
            <person name="Wek R.C."/>
            <person name="Hausser C.A."/>
            <person name="Hatfield G.W."/>
        </authorList>
    </citation>
    <scope>NUCLEOTIDE SEQUENCE [GENOMIC DNA]</scope>
</reference>
<reference key="2">
    <citation type="journal article" date="1985" name="Nucleic Acids Res.">
        <title>The ilvB locus of Escherichia coli K-12 is an operon encoding both subunits of acetohydroxyacid synthase I.</title>
        <authorList>
            <person name="Friden P."/>
            <person name="Donegan J."/>
            <person name="Mullen J."/>
            <person name="Tsui P."/>
            <person name="Freundlich M."/>
        </authorList>
    </citation>
    <scope>NUCLEOTIDE SEQUENCE [GENOMIC DNA]</scope>
</reference>
<reference key="3">
    <citation type="journal article" date="1993" name="Genomics">
        <title>DNA sequence and analysis of 136 kilobases of the Escherichia coli genome: organizational symmetry around the origin of replication.</title>
        <authorList>
            <person name="Burland V.D."/>
            <person name="Plunkett G. III"/>
            <person name="Daniels D.L."/>
            <person name="Blattner F.R."/>
        </authorList>
    </citation>
    <scope>NUCLEOTIDE SEQUENCE [LARGE SCALE GENOMIC DNA]</scope>
    <source>
        <strain>K12 / MG1655 / ATCC 47076</strain>
    </source>
</reference>
<reference key="4">
    <citation type="journal article" date="1997" name="Science">
        <title>The complete genome sequence of Escherichia coli K-12.</title>
        <authorList>
            <person name="Blattner F.R."/>
            <person name="Plunkett G. III"/>
            <person name="Bloch C.A."/>
            <person name="Perna N.T."/>
            <person name="Burland V."/>
            <person name="Riley M."/>
            <person name="Collado-Vides J."/>
            <person name="Glasner J.D."/>
            <person name="Rode C.K."/>
            <person name="Mayhew G.F."/>
            <person name="Gregor J."/>
            <person name="Davis N.W."/>
            <person name="Kirkpatrick H.A."/>
            <person name="Goeden M.A."/>
            <person name="Rose D.J."/>
            <person name="Mau B."/>
            <person name="Shao Y."/>
        </authorList>
    </citation>
    <scope>NUCLEOTIDE SEQUENCE [LARGE SCALE GENOMIC DNA]</scope>
    <source>
        <strain>K12 / MG1655 / ATCC 47076</strain>
    </source>
</reference>
<reference key="5">
    <citation type="journal article" date="2006" name="Mol. Syst. Biol.">
        <title>Highly accurate genome sequences of Escherichia coli K-12 strains MG1655 and W3110.</title>
        <authorList>
            <person name="Hayashi K."/>
            <person name="Morooka N."/>
            <person name="Yamamoto Y."/>
            <person name="Fujita K."/>
            <person name="Isono K."/>
            <person name="Choi S."/>
            <person name="Ohtsubo E."/>
            <person name="Baba T."/>
            <person name="Wanner B.L."/>
            <person name="Mori H."/>
            <person name="Horiuchi T."/>
        </authorList>
    </citation>
    <scope>NUCLEOTIDE SEQUENCE [LARGE SCALE GENOMIC DNA]</scope>
    <source>
        <strain>K12 / W3110 / ATCC 27325 / DSM 5911</strain>
    </source>
</reference>
<reference key="6">
    <citation type="journal article" date="1997" name="Electrophoresis">
        <title>Escherichia coli proteome analysis using the gene-protein database.</title>
        <authorList>
            <person name="VanBogelen R.A."/>
            <person name="Abshire K.Z."/>
            <person name="Moldover B."/>
            <person name="Olson E.R."/>
            <person name="Neidhardt F.C."/>
        </authorList>
    </citation>
    <scope>IDENTIFICATION BY 2D-GEL</scope>
</reference>
<organism>
    <name type="scientific">Escherichia coli (strain K12)</name>
    <dbReference type="NCBI Taxonomy" id="83333"/>
    <lineage>
        <taxon>Bacteria</taxon>
        <taxon>Pseudomonadati</taxon>
        <taxon>Pseudomonadota</taxon>
        <taxon>Gammaproteobacteria</taxon>
        <taxon>Enterobacterales</taxon>
        <taxon>Enterobacteriaceae</taxon>
        <taxon>Escherichia</taxon>
    </lineage>
</organism>
<accession>P08142</accession>
<accession>Q2M7Y4</accession>
<proteinExistence type="evidence at protein level"/>